<comment type="function">
    <text evidence="1">Converts GTP to 7,8-dihydroneopterin triphosphate.</text>
</comment>
<comment type="catalytic activity">
    <reaction evidence="1">
        <text>GTP + H2O = 7,8-dihydroneopterin 3'-triphosphate + formate + H(+)</text>
        <dbReference type="Rhea" id="RHEA:17473"/>
        <dbReference type="ChEBI" id="CHEBI:15377"/>
        <dbReference type="ChEBI" id="CHEBI:15378"/>
        <dbReference type="ChEBI" id="CHEBI:15740"/>
        <dbReference type="ChEBI" id="CHEBI:37565"/>
        <dbReference type="ChEBI" id="CHEBI:58462"/>
        <dbReference type="EC" id="3.5.4.16"/>
    </reaction>
</comment>
<comment type="pathway">
    <text evidence="1">Cofactor biosynthesis; 7,8-dihydroneopterin triphosphate biosynthesis; 7,8-dihydroneopterin triphosphate from GTP: step 1/1.</text>
</comment>
<comment type="similarity">
    <text evidence="1">Belongs to the GTP cyclohydrolase IV family.</text>
</comment>
<name>GCH4_STAEQ</name>
<proteinExistence type="inferred from homology"/>
<sequence length="292" mass="33656">MTEFDLSTREGRWKHFGSVDPVKGTKPTTKNEMTDLQSTHKNFLFEIEEVGIKNLTYPVLIDQYQTAGLFSFSTSLNKNEKGINMSRILESVEKHYDNGIELEFNTLHQLLRTLQDKMNQNAAGVDVSGKWFFDRYSPVTHIKAVGHADVTYGLAIENHTVTRKELTIQAKVTTLCPCSKEISEYSAHNQRGIVTVKAYLDKNNDVIDDYKNKILDAMEANASSILYPILKRPDEKRVTERAYENPRFVEDLIRLIAADLVEFDWIEGFDIECRNEESIHQHDAFARLKYRK</sequence>
<dbReference type="EC" id="3.5.4.16" evidence="1"/>
<dbReference type="EMBL" id="CP000029">
    <property type="protein sequence ID" value="AAW53584.1"/>
    <property type="molecule type" value="Genomic_DNA"/>
</dbReference>
<dbReference type="RefSeq" id="WP_002445753.1">
    <property type="nucleotide sequence ID" value="NC_002976.3"/>
</dbReference>
<dbReference type="SMR" id="Q5HRI1"/>
<dbReference type="STRING" id="176279.SERP0212"/>
<dbReference type="KEGG" id="ser:SERP0212"/>
<dbReference type="eggNOG" id="COG1469">
    <property type="taxonomic scope" value="Bacteria"/>
</dbReference>
<dbReference type="HOGENOM" id="CLU_062816_1_1_9"/>
<dbReference type="UniPathway" id="UPA00848">
    <property type="reaction ID" value="UER00151"/>
</dbReference>
<dbReference type="Proteomes" id="UP000000531">
    <property type="component" value="Chromosome"/>
</dbReference>
<dbReference type="GO" id="GO:0003934">
    <property type="term" value="F:GTP cyclohydrolase I activity"/>
    <property type="evidence" value="ECO:0007669"/>
    <property type="project" value="UniProtKB-UniRule"/>
</dbReference>
<dbReference type="GO" id="GO:0046654">
    <property type="term" value="P:tetrahydrofolate biosynthetic process"/>
    <property type="evidence" value="ECO:0007669"/>
    <property type="project" value="UniProtKB-UniRule"/>
</dbReference>
<dbReference type="Gene3D" id="3.10.270.10">
    <property type="entry name" value="Urate Oxidase"/>
    <property type="match status" value="1"/>
</dbReference>
<dbReference type="HAMAP" id="MF_01527_B">
    <property type="entry name" value="GTP_cyclohydrol_B"/>
    <property type="match status" value="1"/>
</dbReference>
<dbReference type="InterPro" id="IPR022838">
    <property type="entry name" value="GTP_cyclohydrolase_FolE2"/>
</dbReference>
<dbReference type="InterPro" id="IPR003801">
    <property type="entry name" value="GTP_cyclohydrolase_FolE2/MptA"/>
</dbReference>
<dbReference type="NCBIfam" id="NF010200">
    <property type="entry name" value="PRK13674.1-1"/>
    <property type="match status" value="1"/>
</dbReference>
<dbReference type="PANTHER" id="PTHR36445">
    <property type="entry name" value="GTP CYCLOHYDROLASE MPTA"/>
    <property type="match status" value="1"/>
</dbReference>
<dbReference type="PANTHER" id="PTHR36445:SF1">
    <property type="entry name" value="GTP CYCLOHYDROLASE MPTA"/>
    <property type="match status" value="1"/>
</dbReference>
<dbReference type="Pfam" id="PF02649">
    <property type="entry name" value="GCHY-1"/>
    <property type="match status" value="1"/>
</dbReference>
<organism>
    <name type="scientific">Staphylococcus epidermidis (strain ATCC 35984 / DSM 28319 / BCRC 17069 / CCUG 31568 / BM 3577 / RP62A)</name>
    <dbReference type="NCBI Taxonomy" id="176279"/>
    <lineage>
        <taxon>Bacteria</taxon>
        <taxon>Bacillati</taxon>
        <taxon>Bacillota</taxon>
        <taxon>Bacilli</taxon>
        <taxon>Bacillales</taxon>
        <taxon>Staphylococcaceae</taxon>
        <taxon>Staphylococcus</taxon>
    </lineage>
</organism>
<keyword id="KW-0378">Hydrolase</keyword>
<keyword id="KW-1185">Reference proteome</keyword>
<protein>
    <recommendedName>
        <fullName evidence="1">GTP cyclohydrolase FolE2</fullName>
        <ecNumber evidence="1">3.5.4.16</ecNumber>
    </recommendedName>
</protein>
<evidence type="ECO:0000255" key="1">
    <source>
        <dbReference type="HAMAP-Rule" id="MF_01527"/>
    </source>
</evidence>
<accession>Q5HRI1</accession>
<reference key="1">
    <citation type="journal article" date="2005" name="J. Bacteriol.">
        <title>Insights on evolution of virulence and resistance from the complete genome analysis of an early methicillin-resistant Staphylococcus aureus strain and a biofilm-producing methicillin-resistant Staphylococcus epidermidis strain.</title>
        <authorList>
            <person name="Gill S.R."/>
            <person name="Fouts D.E."/>
            <person name="Archer G.L."/>
            <person name="Mongodin E.F."/>
            <person name="DeBoy R.T."/>
            <person name="Ravel J."/>
            <person name="Paulsen I.T."/>
            <person name="Kolonay J.F."/>
            <person name="Brinkac L.M."/>
            <person name="Beanan M.J."/>
            <person name="Dodson R.J."/>
            <person name="Daugherty S.C."/>
            <person name="Madupu R."/>
            <person name="Angiuoli S.V."/>
            <person name="Durkin A.S."/>
            <person name="Haft D.H."/>
            <person name="Vamathevan J.J."/>
            <person name="Khouri H."/>
            <person name="Utterback T.R."/>
            <person name="Lee C."/>
            <person name="Dimitrov G."/>
            <person name="Jiang L."/>
            <person name="Qin H."/>
            <person name="Weidman J."/>
            <person name="Tran K."/>
            <person name="Kang K.H."/>
            <person name="Hance I.R."/>
            <person name="Nelson K.E."/>
            <person name="Fraser C.M."/>
        </authorList>
    </citation>
    <scope>NUCLEOTIDE SEQUENCE [LARGE SCALE GENOMIC DNA]</scope>
    <source>
        <strain>ATCC 35984 / DSM 28319 / BCRC 17069 / CCUG 31568 / BM 3577 / RP62A</strain>
    </source>
</reference>
<gene>
    <name evidence="1" type="primary">folE2</name>
    <name type="ordered locus">SERP0212</name>
</gene>
<feature type="chain" id="PRO_0000147731" description="GTP cyclohydrolase FolE2">
    <location>
        <begin position="1"/>
        <end position="292"/>
    </location>
</feature>
<feature type="site" description="May be catalytically important" evidence="1">
    <location>
        <position position="176"/>
    </location>
</feature>